<gene>
    <name evidence="1" type="primary">trpB</name>
    <name type="ordered locus">THA_1014</name>
</gene>
<dbReference type="EC" id="4.2.1.20" evidence="1"/>
<dbReference type="EMBL" id="CP001185">
    <property type="protein sequence ID" value="ACJ75472.1"/>
    <property type="molecule type" value="Genomic_DNA"/>
</dbReference>
<dbReference type="RefSeq" id="WP_012579932.1">
    <property type="nucleotide sequence ID" value="NC_011653.1"/>
</dbReference>
<dbReference type="SMR" id="B7IHA8"/>
<dbReference type="STRING" id="484019.THA_1014"/>
<dbReference type="KEGG" id="taf:THA_1014"/>
<dbReference type="eggNOG" id="COG1350">
    <property type="taxonomic scope" value="Bacteria"/>
</dbReference>
<dbReference type="HOGENOM" id="CLU_042858_1_0_0"/>
<dbReference type="OrthoDB" id="9766131at2"/>
<dbReference type="UniPathway" id="UPA00035">
    <property type="reaction ID" value="UER00044"/>
</dbReference>
<dbReference type="Proteomes" id="UP000002453">
    <property type="component" value="Chromosome"/>
</dbReference>
<dbReference type="GO" id="GO:0005737">
    <property type="term" value="C:cytoplasm"/>
    <property type="evidence" value="ECO:0007669"/>
    <property type="project" value="TreeGrafter"/>
</dbReference>
<dbReference type="GO" id="GO:0052684">
    <property type="term" value="F:L-serine hydro-lyase (adding indole, L-tryptophan-forming) activity"/>
    <property type="evidence" value="ECO:0007669"/>
    <property type="project" value="TreeGrafter"/>
</dbReference>
<dbReference type="GO" id="GO:0030170">
    <property type="term" value="F:pyridoxal phosphate binding"/>
    <property type="evidence" value="ECO:0007669"/>
    <property type="project" value="InterPro"/>
</dbReference>
<dbReference type="GO" id="GO:0004834">
    <property type="term" value="F:tryptophan synthase activity"/>
    <property type="evidence" value="ECO:0007669"/>
    <property type="project" value="UniProtKB-UniRule"/>
</dbReference>
<dbReference type="CDD" id="cd06446">
    <property type="entry name" value="Trp-synth_B"/>
    <property type="match status" value="1"/>
</dbReference>
<dbReference type="Gene3D" id="3.40.50.1100">
    <property type="match status" value="2"/>
</dbReference>
<dbReference type="HAMAP" id="MF_00133">
    <property type="entry name" value="Trp_synth_beta"/>
    <property type="match status" value="1"/>
</dbReference>
<dbReference type="InterPro" id="IPR006316">
    <property type="entry name" value="Trp_synth_b-like"/>
</dbReference>
<dbReference type="InterPro" id="IPR006653">
    <property type="entry name" value="Trp_synth_b_CS"/>
</dbReference>
<dbReference type="InterPro" id="IPR006654">
    <property type="entry name" value="Trp_synth_beta"/>
</dbReference>
<dbReference type="InterPro" id="IPR023026">
    <property type="entry name" value="Trp_synth_beta/beta-like"/>
</dbReference>
<dbReference type="InterPro" id="IPR001926">
    <property type="entry name" value="TrpB-like_PALP"/>
</dbReference>
<dbReference type="InterPro" id="IPR036052">
    <property type="entry name" value="TrpB-like_PALP_sf"/>
</dbReference>
<dbReference type="NCBIfam" id="NF009057">
    <property type="entry name" value="PRK12391.1"/>
    <property type="match status" value="1"/>
</dbReference>
<dbReference type="NCBIfam" id="TIGR01415">
    <property type="entry name" value="trpB_rel"/>
    <property type="match status" value="1"/>
</dbReference>
<dbReference type="PANTHER" id="PTHR48077:SF6">
    <property type="entry name" value="TRYPTOPHAN SYNTHASE"/>
    <property type="match status" value="1"/>
</dbReference>
<dbReference type="PANTHER" id="PTHR48077">
    <property type="entry name" value="TRYPTOPHAN SYNTHASE-RELATED"/>
    <property type="match status" value="1"/>
</dbReference>
<dbReference type="Pfam" id="PF00291">
    <property type="entry name" value="PALP"/>
    <property type="match status" value="1"/>
</dbReference>
<dbReference type="PIRSF" id="PIRSF001413">
    <property type="entry name" value="Trp_syn_beta"/>
    <property type="match status" value="1"/>
</dbReference>
<dbReference type="PIRSF" id="PIRSF500824">
    <property type="entry name" value="TrpB_prok"/>
    <property type="match status" value="1"/>
</dbReference>
<dbReference type="SUPFAM" id="SSF53686">
    <property type="entry name" value="Tryptophan synthase beta subunit-like PLP-dependent enzymes"/>
    <property type="match status" value="1"/>
</dbReference>
<dbReference type="PROSITE" id="PS00168">
    <property type="entry name" value="TRP_SYNTHASE_BETA"/>
    <property type="match status" value="1"/>
</dbReference>
<evidence type="ECO:0000255" key="1">
    <source>
        <dbReference type="HAMAP-Rule" id="MF_00133"/>
    </source>
</evidence>
<organism>
    <name type="scientific">Thermosipho africanus (strain TCF52B)</name>
    <dbReference type="NCBI Taxonomy" id="484019"/>
    <lineage>
        <taxon>Bacteria</taxon>
        <taxon>Thermotogati</taxon>
        <taxon>Thermotogota</taxon>
        <taxon>Thermotogae</taxon>
        <taxon>Thermotogales</taxon>
        <taxon>Fervidobacteriaceae</taxon>
        <taxon>Thermosipho</taxon>
    </lineage>
</organism>
<feature type="chain" id="PRO_1000117764" description="Tryptophan synthase beta chain">
    <location>
        <begin position="1"/>
        <end position="420"/>
    </location>
</feature>
<feature type="modified residue" description="N6-(pyridoxal phosphate)lysine" evidence="1">
    <location>
        <position position="112"/>
    </location>
</feature>
<comment type="function">
    <text evidence="1">The beta subunit is responsible for the synthesis of L-tryptophan from indole and L-serine.</text>
</comment>
<comment type="catalytic activity">
    <reaction evidence="1">
        <text>(1S,2R)-1-C-(indol-3-yl)glycerol 3-phosphate + L-serine = D-glyceraldehyde 3-phosphate + L-tryptophan + H2O</text>
        <dbReference type="Rhea" id="RHEA:10532"/>
        <dbReference type="ChEBI" id="CHEBI:15377"/>
        <dbReference type="ChEBI" id="CHEBI:33384"/>
        <dbReference type="ChEBI" id="CHEBI:57912"/>
        <dbReference type="ChEBI" id="CHEBI:58866"/>
        <dbReference type="ChEBI" id="CHEBI:59776"/>
        <dbReference type="EC" id="4.2.1.20"/>
    </reaction>
</comment>
<comment type="cofactor">
    <cofactor evidence="1">
        <name>pyridoxal 5'-phosphate</name>
        <dbReference type="ChEBI" id="CHEBI:597326"/>
    </cofactor>
</comment>
<comment type="pathway">
    <text evidence="1">Amino-acid biosynthesis; L-tryptophan biosynthesis; L-tryptophan from chorismate: step 5/5.</text>
</comment>
<comment type="subunit">
    <text evidence="1">Tetramer of two alpha and two beta chains.</text>
</comment>
<comment type="similarity">
    <text evidence="1">Belongs to the TrpB family.</text>
</comment>
<sequence>MREFVNLKFEEMPKVWYNVLSDLPFKLDPPLDPETNKPMSPEKLLKIFPAPLLEQEVNDTDKFIDIPEEILKEYAVYRPTPLIRANFLEEYLQTPAKIYYKYEGQSPTGSHKTNTALAQAYYNKISGVKKLYTETGAGQWGSALSYSGLKFGINVNIYMVRVSFNQKPARKSIMKLFNGKVTPSPSRNTKSGRKYEENHPGSLGIAISEAMEEVLQRNDSKYALGSVLNHVLLHQTIIGLEIKKQLEKLNIQPDVIIGCHGGGSNFGGTILPFIPDKLSGKNIRFIACEPESCPTLTKGEYRYDFGDTAGFTPLLKMYTLGKDFIPPSIHAGGLRYHGAAPIISALLNHNLIEAKAFSQEETFKAARLFSKLEGIIPAPESSHAIAGAIKEALNAKKENKEKIIVFTLSGHGLFDLNAYI</sequence>
<keyword id="KW-0028">Amino-acid biosynthesis</keyword>
<keyword id="KW-0057">Aromatic amino acid biosynthesis</keyword>
<keyword id="KW-0456">Lyase</keyword>
<keyword id="KW-0663">Pyridoxal phosphate</keyword>
<keyword id="KW-1185">Reference proteome</keyword>
<keyword id="KW-0822">Tryptophan biosynthesis</keyword>
<accession>B7IHA8</accession>
<proteinExistence type="inferred from homology"/>
<protein>
    <recommendedName>
        <fullName evidence="1">Tryptophan synthase beta chain</fullName>
        <ecNumber evidence="1">4.2.1.20</ecNumber>
    </recommendedName>
</protein>
<name>TRPB_THEAB</name>
<reference key="1">
    <citation type="journal article" date="2009" name="J. Bacteriol.">
        <title>The genome of Thermosipho africanus TCF52B: lateral genetic connections to the Firmicutes and Archaea.</title>
        <authorList>
            <person name="Nesboe C.L."/>
            <person name="Bapteste E."/>
            <person name="Curtis B."/>
            <person name="Dahle H."/>
            <person name="Lopez P."/>
            <person name="Macleod D."/>
            <person name="Dlutek M."/>
            <person name="Bowman S."/>
            <person name="Zhaxybayeva O."/>
            <person name="Birkeland N.-K."/>
            <person name="Doolittle W.F."/>
        </authorList>
    </citation>
    <scope>NUCLEOTIDE SEQUENCE [LARGE SCALE GENOMIC DNA]</scope>
    <source>
        <strain>TCF52B</strain>
    </source>
</reference>